<reference evidence="7" key="1">
    <citation type="journal article" date="2005" name="Genome Biol.">
        <title>Full-length cDNAs from chicken bursal lymphocytes to facilitate gene function analysis.</title>
        <authorList>
            <person name="Caldwell R.B."/>
            <person name="Kierzek A.M."/>
            <person name="Arakawa H."/>
            <person name="Bezzubov Y."/>
            <person name="Zaim J."/>
            <person name="Fiedler P."/>
            <person name="Kutter S."/>
            <person name="Blagodatski A."/>
            <person name="Kostovska D."/>
            <person name="Koter M."/>
            <person name="Plachy J."/>
            <person name="Carninci P."/>
            <person name="Hayashizaki Y."/>
            <person name="Buerstedde J.-M."/>
        </authorList>
    </citation>
    <scope>NUCLEOTIDE SEQUENCE [LARGE SCALE MRNA]</scope>
    <source>
        <strain evidence="7">CB</strain>
        <tissue evidence="7">Bursa of Fabricius</tissue>
    </source>
</reference>
<name>ACAP2_CHICK</name>
<accession>Q5ZK62</accession>
<gene>
    <name type="primary">ACAP2</name>
    <name type="synonym">CENTB2</name>
    <name type="ORF">RCJMB04_12p24</name>
</gene>
<protein>
    <recommendedName>
        <fullName>Arf-GAP with coiled-coil, ANK repeat and PH domain-containing protein 2</fullName>
    </recommendedName>
    <alternativeName>
        <fullName>Centaurin-beta-2</fullName>
        <shortName>Cnt-b2</shortName>
    </alternativeName>
</protein>
<proteinExistence type="evidence at transcript level"/>
<sequence length="781" mass="88454">MKVTVDFEECLKDSPRFRAALEEVEGDVAELELKLDKLVKLCIAMIDTGKAFCLANKQFMNGIRDLAQYSCKDALVETNLTKFSDTLQEMINYHNILFDQTQRSIKAQLQTFVKEDIKKFKDAKKQFEKVSEEKENALVKNAQVQRNKQHEVEEATNILTATRKCFRHIALDYVLQINVLQSKRRSEILKSMLSFMYAHLTFFHQGYDLFSELGPYMKDLGAQLDQLAVDAAKEKRDMEQKHSTIQQKDYSGDDTKLEYNVDAANGIVMEGYLFKRASNAFKTWNRRWFSIQNNQLVYQKKFKDNPTVVVEDLRLCTVKHCEDIERRFCFEVVSPTKSCMLQADSEKLRQAWIKAVQTSIATAYREKGDESEKQEKKSSPSTGSLESGSETKEKLLKGESALQRVQCIPGNAACCDCGLADPRWASINLGITLCIECSGIHRSLGVHFSKVRSLTLDSWEPELLKLMCELGNDVINRIYEAKLEKMGVKKPQPGSQRQEKEMYIKAKYVERKFVEKQPAAAVSPLESRTKVLPQSQEEKRHSAPEKSFLAIEQGAASPRVRSSDSGIQQSVDDSREHLASTISANSLYEPEGEKQESSVFYDSRQLNPGLHLYRAAFEKNLPDMAEALAHGAEVNWVNMEENKATPLIQAVRGGSLVTCEFLLQNGANVNIRDMKGRGPLHHATVLGHTGQVCLFLKRGANQHATDEDGKDPLSIAVEAANADIVTLLRLARMNEEMRESEGLYGQPGDEIYQDIFRDFSQMASNNPEKLNRFQQSDSQKP</sequence>
<organism>
    <name type="scientific">Gallus gallus</name>
    <name type="common">Chicken</name>
    <dbReference type="NCBI Taxonomy" id="9031"/>
    <lineage>
        <taxon>Eukaryota</taxon>
        <taxon>Metazoa</taxon>
        <taxon>Chordata</taxon>
        <taxon>Craniata</taxon>
        <taxon>Vertebrata</taxon>
        <taxon>Euteleostomi</taxon>
        <taxon>Archelosauria</taxon>
        <taxon>Archosauria</taxon>
        <taxon>Dinosauria</taxon>
        <taxon>Saurischia</taxon>
        <taxon>Theropoda</taxon>
        <taxon>Coelurosauria</taxon>
        <taxon>Aves</taxon>
        <taxon>Neognathae</taxon>
        <taxon>Galloanserae</taxon>
        <taxon>Galliformes</taxon>
        <taxon>Phasianidae</taxon>
        <taxon>Phasianinae</taxon>
        <taxon>Gallus</taxon>
    </lineage>
</organism>
<feature type="chain" id="PRO_0000306388" description="Arf-GAP with coiled-coil, ANK repeat and PH domain-containing protein 2">
    <location>
        <begin position="1"/>
        <end position="781"/>
    </location>
</feature>
<feature type="domain" description="BAR" evidence="3">
    <location>
        <begin position="1"/>
        <end position="226"/>
    </location>
</feature>
<feature type="domain" description="PH" evidence="4">
    <location>
        <begin position="266"/>
        <end position="361"/>
    </location>
</feature>
<feature type="domain" description="Arf-GAP" evidence="5">
    <location>
        <begin position="399"/>
        <end position="521"/>
    </location>
</feature>
<feature type="repeat" description="ANK 1" evidence="3">
    <location>
        <begin position="642"/>
        <end position="671"/>
    </location>
</feature>
<feature type="repeat" description="ANK 2" evidence="3">
    <location>
        <begin position="675"/>
        <end position="704"/>
    </location>
</feature>
<feature type="repeat" description="ANK 3" evidence="3">
    <location>
        <begin position="708"/>
        <end position="737"/>
    </location>
</feature>
<feature type="zinc finger region" description="C4-type" evidence="5">
    <location>
        <begin position="414"/>
        <end position="437"/>
    </location>
</feature>
<feature type="region of interest" description="Disordered" evidence="6">
    <location>
        <begin position="365"/>
        <end position="390"/>
    </location>
</feature>
<feature type="region of interest" description="Disordered" evidence="6">
    <location>
        <begin position="520"/>
        <end position="576"/>
    </location>
</feature>
<feature type="compositionally biased region" description="Basic and acidic residues" evidence="6">
    <location>
        <begin position="365"/>
        <end position="378"/>
    </location>
</feature>
<feature type="compositionally biased region" description="Low complexity" evidence="6">
    <location>
        <begin position="379"/>
        <end position="388"/>
    </location>
</feature>
<dbReference type="EMBL" id="AJ720222">
    <property type="protein sequence ID" value="CAG31881.1"/>
    <property type="molecule type" value="mRNA"/>
</dbReference>
<dbReference type="RefSeq" id="NP_001006548.1">
    <property type="nucleotide sequence ID" value="NM_001006548.2"/>
</dbReference>
<dbReference type="SMR" id="Q5ZK62"/>
<dbReference type="BioGRID" id="685213">
    <property type="interactions" value="1"/>
</dbReference>
<dbReference type="FunCoup" id="Q5ZK62">
    <property type="interactions" value="1993"/>
</dbReference>
<dbReference type="STRING" id="9031.ENSGALP00000073155"/>
<dbReference type="PaxDb" id="9031-ENSGALP00000011389"/>
<dbReference type="GeneID" id="424895"/>
<dbReference type="KEGG" id="gga:424895"/>
<dbReference type="CTD" id="23527"/>
<dbReference type="VEuPathDB" id="HostDB:geneid_424895"/>
<dbReference type="eggNOG" id="KOG0521">
    <property type="taxonomic scope" value="Eukaryota"/>
</dbReference>
<dbReference type="HOGENOM" id="CLU_012513_0_1_1"/>
<dbReference type="InParanoid" id="Q5ZK62"/>
<dbReference type="OrthoDB" id="10070851at2759"/>
<dbReference type="PhylomeDB" id="Q5ZK62"/>
<dbReference type="TreeFam" id="TF318315"/>
<dbReference type="PRO" id="PR:Q5ZK62"/>
<dbReference type="Proteomes" id="UP000000539">
    <property type="component" value="Chromosome 9"/>
</dbReference>
<dbReference type="Bgee" id="ENSGALG00000007040">
    <property type="expression patterns" value="Expressed in colon and 12 other cell types or tissues"/>
</dbReference>
<dbReference type="GO" id="GO:0010008">
    <property type="term" value="C:endosome membrane"/>
    <property type="evidence" value="ECO:0000250"/>
    <property type="project" value="UniProtKB"/>
</dbReference>
<dbReference type="GO" id="GO:0005886">
    <property type="term" value="C:plasma membrane"/>
    <property type="evidence" value="ECO:0000250"/>
    <property type="project" value="UniProtKB"/>
</dbReference>
<dbReference type="GO" id="GO:0005096">
    <property type="term" value="F:GTPase activator activity"/>
    <property type="evidence" value="ECO:0007669"/>
    <property type="project" value="UniProtKB-KW"/>
</dbReference>
<dbReference type="GO" id="GO:0008270">
    <property type="term" value="F:zinc ion binding"/>
    <property type="evidence" value="ECO:0007669"/>
    <property type="project" value="UniProtKB-KW"/>
</dbReference>
<dbReference type="GO" id="GO:1990090">
    <property type="term" value="P:cellular response to nerve growth factor stimulus"/>
    <property type="evidence" value="ECO:0000250"/>
    <property type="project" value="UniProtKB"/>
</dbReference>
<dbReference type="GO" id="GO:0032456">
    <property type="term" value="P:endocytic recycling"/>
    <property type="evidence" value="ECO:0000250"/>
    <property type="project" value="UniProtKB"/>
</dbReference>
<dbReference type="CDD" id="cd08851">
    <property type="entry name" value="ArfGap_ACAP2"/>
    <property type="match status" value="1"/>
</dbReference>
<dbReference type="CDD" id="cd07638">
    <property type="entry name" value="BAR_ACAP2"/>
    <property type="match status" value="1"/>
</dbReference>
<dbReference type="CDD" id="cd13250">
    <property type="entry name" value="PH_ACAP"/>
    <property type="match status" value="1"/>
</dbReference>
<dbReference type="FunFam" id="1.10.220.150:FF:000007">
    <property type="entry name" value="Arf-GAP with coiled-coil, ANK repeat and PH domain-containing protein 2"/>
    <property type="match status" value="1"/>
</dbReference>
<dbReference type="FunFam" id="1.25.40.20:FF:000020">
    <property type="entry name" value="Arf-GAP with coiled-coil, ANK repeat and PH domain-containing protein 2"/>
    <property type="match status" value="1"/>
</dbReference>
<dbReference type="FunFam" id="2.30.29.30:FF:000026">
    <property type="entry name" value="Arf-GAP with coiled-coil, ANK repeat and PH domain-containing protein 2"/>
    <property type="match status" value="1"/>
</dbReference>
<dbReference type="FunFam" id="1.20.1270.60:FF:000025">
    <property type="entry name" value="arf-GAP with coiled-coil, ANK repeat and PH domain-containing protein 2"/>
    <property type="match status" value="1"/>
</dbReference>
<dbReference type="Gene3D" id="1.25.40.20">
    <property type="entry name" value="Ankyrin repeat-containing domain"/>
    <property type="match status" value="1"/>
</dbReference>
<dbReference type="Gene3D" id="1.10.220.150">
    <property type="entry name" value="Arf GTPase activating protein"/>
    <property type="match status" value="1"/>
</dbReference>
<dbReference type="Gene3D" id="1.20.1270.60">
    <property type="entry name" value="Arfaptin homology (AH) domain/BAR domain"/>
    <property type="match status" value="1"/>
</dbReference>
<dbReference type="Gene3D" id="2.30.29.30">
    <property type="entry name" value="Pleckstrin-homology domain (PH domain)/Phosphotyrosine-binding domain (PTB)"/>
    <property type="match status" value="1"/>
</dbReference>
<dbReference type="InterPro" id="IPR045258">
    <property type="entry name" value="ACAP1/2/3-like"/>
</dbReference>
<dbReference type="InterPro" id="IPR027267">
    <property type="entry name" value="AH/BAR_dom_sf"/>
</dbReference>
<dbReference type="InterPro" id="IPR002110">
    <property type="entry name" value="Ankyrin_rpt"/>
</dbReference>
<dbReference type="InterPro" id="IPR036770">
    <property type="entry name" value="Ankyrin_rpt-contain_sf"/>
</dbReference>
<dbReference type="InterPro" id="IPR037278">
    <property type="entry name" value="ARFGAP/RecO"/>
</dbReference>
<dbReference type="InterPro" id="IPR001164">
    <property type="entry name" value="ArfGAP_dom"/>
</dbReference>
<dbReference type="InterPro" id="IPR038508">
    <property type="entry name" value="ArfGAP_dom_sf"/>
</dbReference>
<dbReference type="InterPro" id="IPR004148">
    <property type="entry name" value="BAR_dom"/>
</dbReference>
<dbReference type="InterPro" id="IPR011993">
    <property type="entry name" value="PH-like_dom_sf"/>
</dbReference>
<dbReference type="InterPro" id="IPR001849">
    <property type="entry name" value="PH_domain"/>
</dbReference>
<dbReference type="PANTHER" id="PTHR23180:SF241">
    <property type="entry name" value="ARF-GAP WITH COILED-COIL, ANK REPEAT AND PH DOMAIN-CONTAINING PROTEIN 2"/>
    <property type="match status" value="1"/>
</dbReference>
<dbReference type="PANTHER" id="PTHR23180">
    <property type="entry name" value="CENTAURIN/ARF"/>
    <property type="match status" value="1"/>
</dbReference>
<dbReference type="Pfam" id="PF12796">
    <property type="entry name" value="Ank_2"/>
    <property type="match status" value="1"/>
</dbReference>
<dbReference type="Pfam" id="PF01412">
    <property type="entry name" value="ArfGap"/>
    <property type="match status" value="1"/>
</dbReference>
<dbReference type="Pfam" id="PF16746">
    <property type="entry name" value="BAR_3"/>
    <property type="match status" value="1"/>
</dbReference>
<dbReference type="Pfam" id="PF00169">
    <property type="entry name" value="PH"/>
    <property type="match status" value="1"/>
</dbReference>
<dbReference type="PRINTS" id="PR00405">
    <property type="entry name" value="REVINTRACTNG"/>
</dbReference>
<dbReference type="SMART" id="SM00248">
    <property type="entry name" value="ANK"/>
    <property type="match status" value="3"/>
</dbReference>
<dbReference type="SMART" id="SM00105">
    <property type="entry name" value="ArfGap"/>
    <property type="match status" value="1"/>
</dbReference>
<dbReference type="SMART" id="SM00233">
    <property type="entry name" value="PH"/>
    <property type="match status" value="1"/>
</dbReference>
<dbReference type="SUPFAM" id="SSF48403">
    <property type="entry name" value="Ankyrin repeat"/>
    <property type="match status" value="1"/>
</dbReference>
<dbReference type="SUPFAM" id="SSF57863">
    <property type="entry name" value="ArfGap/RecO-like zinc finger"/>
    <property type="match status" value="1"/>
</dbReference>
<dbReference type="SUPFAM" id="SSF103657">
    <property type="entry name" value="BAR/IMD domain-like"/>
    <property type="match status" value="1"/>
</dbReference>
<dbReference type="SUPFAM" id="SSF50729">
    <property type="entry name" value="PH domain-like"/>
    <property type="match status" value="1"/>
</dbReference>
<dbReference type="PROSITE" id="PS50297">
    <property type="entry name" value="ANK_REP_REGION"/>
    <property type="match status" value="1"/>
</dbReference>
<dbReference type="PROSITE" id="PS50088">
    <property type="entry name" value="ANK_REPEAT"/>
    <property type="match status" value="2"/>
</dbReference>
<dbReference type="PROSITE" id="PS50115">
    <property type="entry name" value="ARFGAP"/>
    <property type="match status" value="1"/>
</dbReference>
<dbReference type="PROSITE" id="PS50003">
    <property type="entry name" value="PH_DOMAIN"/>
    <property type="match status" value="1"/>
</dbReference>
<keyword id="KW-0040">ANK repeat</keyword>
<keyword id="KW-1003">Cell membrane</keyword>
<keyword id="KW-0175">Coiled coil</keyword>
<keyword id="KW-0967">Endosome</keyword>
<keyword id="KW-0343">GTPase activation</keyword>
<keyword id="KW-0472">Membrane</keyword>
<keyword id="KW-0479">Metal-binding</keyword>
<keyword id="KW-1185">Reference proteome</keyword>
<keyword id="KW-0677">Repeat</keyword>
<keyword id="KW-0862">Zinc</keyword>
<keyword id="KW-0863">Zinc-finger</keyword>
<comment type="function">
    <text evidence="2">GTPase-activating protein (GAP) for ADP ribosylation factor 6 (ARF6).</text>
</comment>
<comment type="activity regulation">
    <text evidence="2">GAP activity stimulated by phosphatidylinositol 4,5-bisphosphate (PIP2) and phosphatidic acid.</text>
</comment>
<comment type="subcellular location">
    <subcellularLocation>
        <location evidence="1">Endosome membrane</location>
        <topology evidence="1">Peripheral membrane protein</topology>
    </subcellularLocation>
    <subcellularLocation>
        <location evidence="2">Cell membrane</location>
    </subcellularLocation>
</comment>
<evidence type="ECO:0000250" key="1"/>
<evidence type="ECO:0000250" key="2">
    <source>
        <dbReference type="UniProtKB" id="Q15057"/>
    </source>
</evidence>
<evidence type="ECO:0000255" key="3"/>
<evidence type="ECO:0000255" key="4">
    <source>
        <dbReference type="PROSITE-ProRule" id="PRU00145"/>
    </source>
</evidence>
<evidence type="ECO:0000255" key="5">
    <source>
        <dbReference type="PROSITE-ProRule" id="PRU00288"/>
    </source>
</evidence>
<evidence type="ECO:0000256" key="6">
    <source>
        <dbReference type="SAM" id="MobiDB-lite"/>
    </source>
</evidence>
<evidence type="ECO:0000312" key="7">
    <source>
        <dbReference type="EMBL" id="CAG31881.1"/>
    </source>
</evidence>